<sequence length="93" mass="10519">MKTFVLLSALVLLAFQVQADPIHKTDEETNTEEQPGEEDQAVSISFGGQEGSALHEELSKKLICYCRIRGCKRRERVFGTCRNLFLTFVFCCS</sequence>
<organism>
    <name type="scientific">Mus musculus</name>
    <name type="common">Mouse</name>
    <dbReference type="NCBI Taxonomy" id="10090"/>
    <lineage>
        <taxon>Eukaryota</taxon>
        <taxon>Metazoa</taxon>
        <taxon>Chordata</taxon>
        <taxon>Craniata</taxon>
        <taxon>Vertebrata</taxon>
        <taxon>Euteleostomi</taxon>
        <taxon>Mammalia</taxon>
        <taxon>Eutheria</taxon>
        <taxon>Euarchontoglires</taxon>
        <taxon>Glires</taxon>
        <taxon>Rodentia</taxon>
        <taxon>Myomorpha</taxon>
        <taxon>Muroidea</taxon>
        <taxon>Muridae</taxon>
        <taxon>Murinae</taxon>
        <taxon>Mus</taxon>
        <taxon>Mus</taxon>
    </lineage>
</organism>
<proteinExistence type="evidence at protein level"/>
<dbReference type="EMBL" id="U12560">
    <property type="protein sequence ID" value="AAA20973.1"/>
    <property type="molecule type" value="Genomic_DNA"/>
</dbReference>
<dbReference type="EMBL" id="U03001">
    <property type="protein sequence ID" value="AAB60678.1"/>
    <property type="molecule type" value="Genomic_DNA"/>
</dbReference>
<dbReference type="EMBL" id="U03000">
    <property type="protein sequence ID" value="AAB60678.1"/>
    <property type="status" value="JOINED"/>
    <property type="molecule type" value="Genomic_DNA"/>
</dbReference>
<dbReference type="EMBL" id="U03033">
    <property type="protein sequence ID" value="AAA57173.1"/>
    <property type="molecule type" value="mRNA"/>
</dbReference>
<dbReference type="CCDS" id="CCDS22152.1"/>
<dbReference type="PIR" id="I49103">
    <property type="entry name" value="I49103"/>
</dbReference>
<dbReference type="SMR" id="P28312"/>
<dbReference type="FunCoup" id="P28312">
    <property type="interactions" value="41"/>
</dbReference>
<dbReference type="STRING" id="10090.ENSMUSP00000077259"/>
<dbReference type="PaxDb" id="10090-ENSMUSP00000077259"/>
<dbReference type="AGR" id="MGI:99583"/>
<dbReference type="MGI" id="MGI:99583">
    <property type="gene designation" value="Defa5"/>
</dbReference>
<dbReference type="InParanoid" id="P28312"/>
<dbReference type="Reactome" id="R-MMU-1461973">
    <property type="pathway name" value="Defensins"/>
</dbReference>
<dbReference type="Reactome" id="R-MMU-1462054">
    <property type="pathway name" value="Alpha-defensins"/>
</dbReference>
<dbReference type="Reactome" id="R-MMU-6798695">
    <property type="pathway name" value="Neutrophil degranulation"/>
</dbReference>
<dbReference type="PRO" id="PR:P28312"/>
<dbReference type="Proteomes" id="UP000000589">
    <property type="component" value="Unplaced"/>
</dbReference>
<dbReference type="RNAct" id="P28312">
    <property type="molecule type" value="protein"/>
</dbReference>
<dbReference type="GO" id="GO:0005615">
    <property type="term" value="C:extracellular space"/>
    <property type="evidence" value="ECO:0007669"/>
    <property type="project" value="InterPro"/>
</dbReference>
<dbReference type="GO" id="GO:0042742">
    <property type="term" value="P:defense response to bacterium"/>
    <property type="evidence" value="ECO:0000314"/>
    <property type="project" value="MGI"/>
</dbReference>
<dbReference type="InterPro" id="IPR016327">
    <property type="entry name" value="Alpha-defensin"/>
</dbReference>
<dbReference type="InterPro" id="IPR006081">
    <property type="entry name" value="Alpha-defensin_C"/>
</dbReference>
<dbReference type="InterPro" id="IPR002366">
    <property type="entry name" value="Alpha-defensin_N"/>
</dbReference>
<dbReference type="InterPro" id="IPR006080">
    <property type="entry name" value="Beta/alpha-defensin_C"/>
</dbReference>
<dbReference type="PANTHER" id="PTHR11876">
    <property type="entry name" value="ALPHA-DEFENSIN 1"/>
    <property type="match status" value="1"/>
</dbReference>
<dbReference type="PANTHER" id="PTHR11876:SF2">
    <property type="entry name" value="ALPHA-DEFENSIN 1-RELATED"/>
    <property type="match status" value="1"/>
</dbReference>
<dbReference type="Pfam" id="PF00323">
    <property type="entry name" value="Defensin_1"/>
    <property type="match status" value="1"/>
</dbReference>
<dbReference type="Pfam" id="PF00879">
    <property type="entry name" value="Defensin_propep"/>
    <property type="match status" value="1"/>
</dbReference>
<dbReference type="PIRSF" id="PIRSF001875">
    <property type="entry name" value="Alpha-defensin"/>
    <property type="match status" value="1"/>
</dbReference>
<dbReference type="SMART" id="SM01418">
    <property type="entry name" value="Defensin_propep"/>
    <property type="match status" value="1"/>
</dbReference>
<dbReference type="SMART" id="SM00048">
    <property type="entry name" value="DEFSN"/>
    <property type="match status" value="1"/>
</dbReference>
<dbReference type="SUPFAM" id="SSF57392">
    <property type="entry name" value="Defensin-like"/>
    <property type="match status" value="1"/>
</dbReference>
<dbReference type="PROSITE" id="PS00269">
    <property type="entry name" value="DEFENSIN"/>
    <property type="match status" value="1"/>
</dbReference>
<reference key="1">
    <citation type="journal article" date="1994" name="Genomics">
        <title>Structure and diversity of the murine cryptdin gene family.</title>
        <authorList>
            <person name="Huttner K.M."/>
            <person name="Selsted M.E."/>
            <person name="Ouellette A.J."/>
        </authorList>
    </citation>
    <scope>NUCLEOTIDE SEQUENCE [GENOMIC DNA]</scope>
    <source>
        <strain>129</strain>
        <strain>C3H/HeJ</strain>
        <tissue>Intestinal epithelium</tissue>
    </source>
</reference>
<reference key="2">
    <citation type="journal article" date="1992" name="J. Cell Biol.">
        <title>Enteric defensins: antibiotic peptide components of intestinal host defense.</title>
        <authorList>
            <person name="Selsted M.E."/>
            <person name="Miller S.I."/>
            <person name="Henschen A.H."/>
            <person name="Ouellette A.J."/>
        </authorList>
    </citation>
    <scope>PROTEIN SEQUENCE OF 59-93</scope>
    <source>
        <strain>SWR/J</strain>
        <tissue>Small intestine</tissue>
    </source>
</reference>
<name>DEFA5_MOUSE</name>
<evidence type="ECO:0000250" key="1"/>
<evidence type="ECO:0000255" key="2"/>
<evidence type="ECO:0000269" key="3">
    <source>
    </source>
</evidence>
<evidence type="ECO:0000305" key="4"/>
<feature type="signal peptide" evidence="2">
    <location>
        <begin position="1"/>
        <end position="19"/>
    </location>
</feature>
<feature type="propeptide" id="PRO_0000006825" evidence="3">
    <location>
        <begin position="20"/>
        <end position="58"/>
    </location>
</feature>
<feature type="peptide" id="PRO_0000006826" description="Alpha-defensin 5">
    <location>
        <begin position="59"/>
        <end position="93"/>
    </location>
</feature>
<feature type="disulfide bond" evidence="1">
    <location>
        <begin position="64"/>
        <end position="92"/>
    </location>
</feature>
<feature type="disulfide bond" evidence="1">
    <location>
        <begin position="66"/>
        <end position="81"/>
    </location>
</feature>
<feature type="disulfide bond" evidence="1">
    <location>
        <begin position="71"/>
        <end position="91"/>
    </location>
</feature>
<feature type="sequence conflict" description="In Ref. 2; AA sequence." evidence="4" ref="2">
    <original>S</original>
    <variation>SA</variation>
    <location>
        <position position="59"/>
    </location>
</feature>
<keyword id="KW-0044">Antibiotic</keyword>
<keyword id="KW-0929">Antimicrobial</keyword>
<keyword id="KW-0211">Defensin</keyword>
<keyword id="KW-0903">Direct protein sequencing</keyword>
<keyword id="KW-1015">Disulfide bond</keyword>
<keyword id="KW-1185">Reference proteome</keyword>
<keyword id="KW-0964">Secreted</keyword>
<keyword id="KW-0732">Signal</keyword>
<protein>
    <recommendedName>
        <fullName>Alpha-defensin 5</fullName>
    </recommendedName>
    <alternativeName>
        <fullName>Defensin-related cryptdin-5</fullName>
    </alternativeName>
</protein>
<gene>
    <name type="primary">Defa5</name>
    <name type="synonym">Defcr5</name>
</gene>
<comment type="function">
    <text>Probably contributes to the antimicrobial barrier function of the small bowel mucosa.</text>
</comment>
<comment type="subcellular location">
    <subcellularLocation>
        <location>Secreted</location>
    </subcellularLocation>
</comment>
<comment type="similarity">
    <text evidence="4">Belongs to the alpha-defensin family.</text>
</comment>
<accession>P28312</accession>
<accession>Q64382</accession>